<name>MATK_WISFR</name>
<keyword id="KW-0150">Chloroplast</keyword>
<keyword id="KW-0507">mRNA processing</keyword>
<keyword id="KW-0934">Plastid</keyword>
<keyword id="KW-0694">RNA-binding</keyword>
<keyword id="KW-0819">tRNA processing</keyword>
<feature type="chain" id="PRO_0000143790" description="Maturase K">
    <location>
        <begin position="1"/>
        <end position="506"/>
    </location>
</feature>
<organism>
    <name type="scientific">Wisteria frutescens</name>
    <name type="common">American wisteria</name>
    <name type="synonym">Glycine frutescens</name>
    <dbReference type="NCBI Taxonomy" id="47096"/>
    <lineage>
        <taxon>Eukaryota</taxon>
        <taxon>Viridiplantae</taxon>
        <taxon>Streptophyta</taxon>
        <taxon>Embryophyta</taxon>
        <taxon>Tracheophyta</taxon>
        <taxon>Spermatophyta</taxon>
        <taxon>Magnoliopsida</taxon>
        <taxon>eudicotyledons</taxon>
        <taxon>Gunneridae</taxon>
        <taxon>Pentapetalae</taxon>
        <taxon>rosids</taxon>
        <taxon>fabids</taxon>
        <taxon>Fabales</taxon>
        <taxon>Fabaceae</taxon>
        <taxon>Papilionoideae</taxon>
        <taxon>50 kb inversion clade</taxon>
        <taxon>NPAAA clade</taxon>
        <taxon>indigoferoid/millettioid clade</taxon>
        <taxon>Wisterieae</taxon>
        <taxon>Wisteria</taxon>
    </lineage>
</organism>
<dbReference type="EMBL" id="AF142731">
    <property type="protein sequence ID" value="AAD52902.1"/>
    <property type="molecule type" value="Genomic_DNA"/>
</dbReference>
<dbReference type="RefSeq" id="YP_010274535.1">
    <property type="nucleotide sequence ID" value="NC_060811.1"/>
</dbReference>
<dbReference type="GeneID" id="70631794"/>
<dbReference type="GO" id="GO:0009507">
    <property type="term" value="C:chloroplast"/>
    <property type="evidence" value="ECO:0007669"/>
    <property type="project" value="UniProtKB-SubCell"/>
</dbReference>
<dbReference type="GO" id="GO:0003723">
    <property type="term" value="F:RNA binding"/>
    <property type="evidence" value="ECO:0007669"/>
    <property type="project" value="UniProtKB-KW"/>
</dbReference>
<dbReference type="GO" id="GO:0006397">
    <property type="term" value="P:mRNA processing"/>
    <property type="evidence" value="ECO:0007669"/>
    <property type="project" value="UniProtKB-KW"/>
</dbReference>
<dbReference type="GO" id="GO:0008380">
    <property type="term" value="P:RNA splicing"/>
    <property type="evidence" value="ECO:0007669"/>
    <property type="project" value="UniProtKB-UniRule"/>
</dbReference>
<dbReference type="GO" id="GO:0008033">
    <property type="term" value="P:tRNA processing"/>
    <property type="evidence" value="ECO:0007669"/>
    <property type="project" value="UniProtKB-KW"/>
</dbReference>
<dbReference type="HAMAP" id="MF_01390">
    <property type="entry name" value="MatK"/>
    <property type="match status" value="1"/>
</dbReference>
<dbReference type="InterPro" id="IPR024937">
    <property type="entry name" value="Domain_X"/>
</dbReference>
<dbReference type="InterPro" id="IPR002866">
    <property type="entry name" value="Maturase_MatK"/>
</dbReference>
<dbReference type="InterPro" id="IPR024942">
    <property type="entry name" value="Maturase_MatK_N"/>
</dbReference>
<dbReference type="PANTHER" id="PTHR34811">
    <property type="entry name" value="MATURASE K"/>
    <property type="match status" value="1"/>
</dbReference>
<dbReference type="PANTHER" id="PTHR34811:SF1">
    <property type="entry name" value="MATURASE K"/>
    <property type="match status" value="1"/>
</dbReference>
<dbReference type="Pfam" id="PF01348">
    <property type="entry name" value="Intron_maturas2"/>
    <property type="match status" value="1"/>
</dbReference>
<dbReference type="Pfam" id="PF01824">
    <property type="entry name" value="MatK_N"/>
    <property type="match status" value="1"/>
</dbReference>
<sequence>MKEYQVYLERDRSRQQDFLYPLIFREYIYGLAYSHDFNRSIFVENVGYDNKSSLLIVKRLITRMYQQNHLIISANDSNKNPFLGYNKNFYSQIISDGFAVVVEIPFFLQLSSSLEEAEIVKSYHNLRSIHSIFPFLEDKFTYLNYVSDIRIPYPIHLEILVQILRYWVKDASFFHLLRFFLYHFSNRNSLITPKKSISTFSKSNPRLFLFLYNFYVCEYESIFRFLRNQSSHLRLKSFSVFFERIFFYAKREHLVKVFPKDFSSTLTFFKDPFIHYVRYQGKSILASKNAPLLMNKWKHYFIHLWQCFFDVWSQPGTIHINQLSEHSFHFLGYFSNVRLNRSVVRSQMLQNTFLIEIVIKKLDIIVPIIPLIRSLAKAKFCNVLGHPLSKSVWADSSDFDIIDRFLRICRNLSHYYNGSSKKKNLYRIKYILRLSCIKTLACKHKSTVRAFLKKSGSEELLEEFFTEEEEILSLIFPRTSSTLQRLHRNRIWYLDILFSNDLVNHE</sequence>
<protein>
    <recommendedName>
        <fullName evidence="1">Maturase K</fullName>
    </recommendedName>
    <alternativeName>
        <fullName evidence="1">Intron maturase</fullName>
    </alternativeName>
</protein>
<geneLocation type="chloroplast"/>
<reference key="1">
    <citation type="journal article" date="2000" name="Am. J. Bot.">
        <title>Phylogenetic systematics of the tribe Millettieae (Leguminosae) based on chloroplast trnK/matK sequences and its implications for evolutionary patterns in Papilionoideae.</title>
        <authorList>
            <person name="Hu J.-M."/>
            <person name="Lavin M."/>
            <person name="Wojciechowski M.F."/>
            <person name="Sanderson M.J."/>
        </authorList>
    </citation>
    <scope>NUCLEOTIDE SEQUENCE [GENOMIC DNA]</scope>
</reference>
<accession>Q9TKP6</accession>
<gene>
    <name evidence="1" type="primary">matK</name>
</gene>
<evidence type="ECO:0000255" key="1">
    <source>
        <dbReference type="HAMAP-Rule" id="MF_01390"/>
    </source>
</evidence>
<comment type="function">
    <text evidence="1">Usually encoded in the trnK tRNA gene intron. Probably assists in splicing its own and other chloroplast group II introns.</text>
</comment>
<comment type="subcellular location">
    <subcellularLocation>
        <location>Plastid</location>
        <location>Chloroplast</location>
    </subcellularLocation>
</comment>
<comment type="similarity">
    <text evidence="1">Belongs to the intron maturase 2 family. MatK subfamily.</text>
</comment>
<proteinExistence type="inferred from homology"/>